<comment type="function">
    <text evidence="1">Involved in transcription antitermination. Required for transcription of ribosomal RNA (rRNA) genes. Binds specifically to the boxA antiterminator sequence of the ribosomal RNA (rrn) operons.</text>
</comment>
<comment type="similarity">
    <text evidence="1">Belongs to the NusB family.</text>
</comment>
<proteinExistence type="inferred from homology"/>
<gene>
    <name evidence="1" type="primary">nusB</name>
    <name type="ordered locus">NTHI1617</name>
</gene>
<accession>Q4QKN1</accession>
<name>NUSB_HAEI8</name>
<feature type="chain" id="PRO_0000265528" description="Transcription antitermination protein NusB">
    <location>
        <begin position="1"/>
        <end position="144"/>
    </location>
</feature>
<reference key="1">
    <citation type="journal article" date="2005" name="J. Bacteriol.">
        <title>Genomic sequence of an otitis media isolate of nontypeable Haemophilus influenzae: comparative study with H. influenzae serotype d, strain KW20.</title>
        <authorList>
            <person name="Harrison A."/>
            <person name="Dyer D.W."/>
            <person name="Gillaspy A."/>
            <person name="Ray W.C."/>
            <person name="Mungur R."/>
            <person name="Carson M.B."/>
            <person name="Zhong H."/>
            <person name="Gipson J."/>
            <person name="Gipson M."/>
            <person name="Johnson L.S."/>
            <person name="Lewis L."/>
            <person name="Bakaletz L.O."/>
            <person name="Munson R.S. Jr."/>
        </authorList>
    </citation>
    <scope>NUCLEOTIDE SEQUENCE [LARGE SCALE GENOMIC DNA]</scope>
    <source>
        <strain>86-028NP</strain>
    </source>
</reference>
<organism>
    <name type="scientific">Haemophilus influenzae (strain 86-028NP)</name>
    <dbReference type="NCBI Taxonomy" id="281310"/>
    <lineage>
        <taxon>Bacteria</taxon>
        <taxon>Pseudomonadati</taxon>
        <taxon>Pseudomonadota</taxon>
        <taxon>Gammaproteobacteria</taxon>
        <taxon>Pasteurellales</taxon>
        <taxon>Pasteurellaceae</taxon>
        <taxon>Haemophilus</taxon>
    </lineage>
</organism>
<sequence>MTEQKQVKKPSARRRARECTVQALYSWAVSGNTAEQVELAFVLDQDMDGVDKPYFRKLFRQTVENIETVDFSISPYIDRAFDELDPIETAILRLAVYELCFELDVPYKVVINEAIEVAKVFGADESHKYINGVLDKIAPALGRK</sequence>
<dbReference type="EMBL" id="CP000057">
    <property type="protein sequence ID" value="AAX88416.1"/>
    <property type="molecule type" value="Genomic_DNA"/>
</dbReference>
<dbReference type="RefSeq" id="WP_011272562.1">
    <property type="nucleotide sequence ID" value="NC_007146.2"/>
</dbReference>
<dbReference type="SMR" id="Q4QKN1"/>
<dbReference type="GeneID" id="93220351"/>
<dbReference type="KEGG" id="hit:NTHI1617"/>
<dbReference type="HOGENOM" id="CLU_087843_4_1_6"/>
<dbReference type="Proteomes" id="UP000002525">
    <property type="component" value="Chromosome"/>
</dbReference>
<dbReference type="GO" id="GO:0005829">
    <property type="term" value="C:cytosol"/>
    <property type="evidence" value="ECO:0007669"/>
    <property type="project" value="TreeGrafter"/>
</dbReference>
<dbReference type="GO" id="GO:0003723">
    <property type="term" value="F:RNA binding"/>
    <property type="evidence" value="ECO:0007669"/>
    <property type="project" value="UniProtKB-UniRule"/>
</dbReference>
<dbReference type="GO" id="GO:0006353">
    <property type="term" value="P:DNA-templated transcription termination"/>
    <property type="evidence" value="ECO:0007669"/>
    <property type="project" value="UniProtKB-UniRule"/>
</dbReference>
<dbReference type="GO" id="GO:0031564">
    <property type="term" value="P:transcription antitermination"/>
    <property type="evidence" value="ECO:0007669"/>
    <property type="project" value="UniProtKB-KW"/>
</dbReference>
<dbReference type="CDD" id="cd00619">
    <property type="entry name" value="Terminator_NusB"/>
    <property type="match status" value="1"/>
</dbReference>
<dbReference type="FunFam" id="1.10.940.10:FF:000001">
    <property type="entry name" value="Transcription antitermination factor NusB"/>
    <property type="match status" value="1"/>
</dbReference>
<dbReference type="Gene3D" id="1.10.940.10">
    <property type="entry name" value="NusB-like"/>
    <property type="match status" value="1"/>
</dbReference>
<dbReference type="HAMAP" id="MF_00073">
    <property type="entry name" value="NusB"/>
    <property type="match status" value="1"/>
</dbReference>
<dbReference type="InterPro" id="IPR035926">
    <property type="entry name" value="NusB-like_sf"/>
</dbReference>
<dbReference type="InterPro" id="IPR011605">
    <property type="entry name" value="NusB_fam"/>
</dbReference>
<dbReference type="InterPro" id="IPR006027">
    <property type="entry name" value="NusB_RsmB_TIM44"/>
</dbReference>
<dbReference type="NCBIfam" id="TIGR01951">
    <property type="entry name" value="nusB"/>
    <property type="match status" value="1"/>
</dbReference>
<dbReference type="PANTHER" id="PTHR11078:SF3">
    <property type="entry name" value="ANTITERMINATION NUSB DOMAIN-CONTAINING PROTEIN"/>
    <property type="match status" value="1"/>
</dbReference>
<dbReference type="PANTHER" id="PTHR11078">
    <property type="entry name" value="N UTILIZATION SUBSTANCE PROTEIN B-RELATED"/>
    <property type="match status" value="1"/>
</dbReference>
<dbReference type="Pfam" id="PF01029">
    <property type="entry name" value="NusB"/>
    <property type="match status" value="1"/>
</dbReference>
<dbReference type="SUPFAM" id="SSF48013">
    <property type="entry name" value="NusB-like"/>
    <property type="match status" value="1"/>
</dbReference>
<protein>
    <recommendedName>
        <fullName evidence="1">Transcription antitermination protein NusB</fullName>
    </recommendedName>
    <alternativeName>
        <fullName evidence="1">Antitermination factor NusB</fullName>
    </alternativeName>
</protein>
<keyword id="KW-0694">RNA-binding</keyword>
<keyword id="KW-0804">Transcription</keyword>
<keyword id="KW-0889">Transcription antitermination</keyword>
<keyword id="KW-0805">Transcription regulation</keyword>
<evidence type="ECO:0000255" key="1">
    <source>
        <dbReference type="HAMAP-Rule" id="MF_00073"/>
    </source>
</evidence>